<name>FLHD_SALSV</name>
<protein>
    <recommendedName>
        <fullName evidence="1">Flagellar transcriptional regulator FlhD</fullName>
    </recommendedName>
</protein>
<dbReference type="EMBL" id="CP001127">
    <property type="protein sequence ID" value="ACF92662.1"/>
    <property type="molecule type" value="Genomic_DNA"/>
</dbReference>
<dbReference type="RefSeq" id="WP_001518146.1">
    <property type="nucleotide sequence ID" value="NC_011094.1"/>
</dbReference>
<dbReference type="SMR" id="B4TYV0"/>
<dbReference type="KEGG" id="sew:SeSA_A2081"/>
<dbReference type="HOGENOM" id="CLU_144160_0_0_6"/>
<dbReference type="Proteomes" id="UP000001865">
    <property type="component" value="Chromosome"/>
</dbReference>
<dbReference type="GO" id="GO:0005737">
    <property type="term" value="C:cytoplasm"/>
    <property type="evidence" value="ECO:0007669"/>
    <property type="project" value="UniProtKB-SubCell"/>
</dbReference>
<dbReference type="GO" id="GO:0003677">
    <property type="term" value="F:DNA binding"/>
    <property type="evidence" value="ECO:0007669"/>
    <property type="project" value="UniProtKB-UniRule"/>
</dbReference>
<dbReference type="GO" id="GO:0044780">
    <property type="term" value="P:bacterial-type flagellum assembly"/>
    <property type="evidence" value="ECO:0007669"/>
    <property type="project" value="InterPro"/>
</dbReference>
<dbReference type="GO" id="GO:0045893">
    <property type="term" value="P:positive regulation of DNA-templated transcription"/>
    <property type="evidence" value="ECO:0007669"/>
    <property type="project" value="InterPro"/>
</dbReference>
<dbReference type="GO" id="GO:1902208">
    <property type="term" value="P:regulation of bacterial-type flagellum assembly"/>
    <property type="evidence" value="ECO:0007669"/>
    <property type="project" value="UniProtKB-UniRule"/>
</dbReference>
<dbReference type="Gene3D" id="1.10.4000.10">
    <property type="entry name" value="Flagellar transcriptional activator FlhD"/>
    <property type="match status" value="1"/>
</dbReference>
<dbReference type="HAMAP" id="MF_00725">
    <property type="entry name" value="FlhD"/>
    <property type="match status" value="1"/>
</dbReference>
<dbReference type="InterPro" id="IPR023559">
    <property type="entry name" value="Flagellar_FlhD"/>
</dbReference>
<dbReference type="InterPro" id="IPR036194">
    <property type="entry name" value="FlhD_sf"/>
</dbReference>
<dbReference type="NCBIfam" id="NF002783">
    <property type="entry name" value="PRK02909.1-1"/>
    <property type="match status" value="1"/>
</dbReference>
<dbReference type="Pfam" id="PF05247">
    <property type="entry name" value="FlhD"/>
    <property type="match status" value="1"/>
</dbReference>
<dbReference type="SUPFAM" id="SSF63592">
    <property type="entry name" value="Flagellar transcriptional activator FlhD"/>
    <property type="match status" value="1"/>
</dbReference>
<proteinExistence type="inferred from homology"/>
<keyword id="KW-0010">Activator</keyword>
<keyword id="KW-1005">Bacterial flagellum biogenesis</keyword>
<keyword id="KW-0963">Cytoplasm</keyword>
<keyword id="KW-1015">Disulfide bond</keyword>
<keyword id="KW-0238">DNA-binding</keyword>
<keyword id="KW-0804">Transcription</keyword>
<keyword id="KW-0805">Transcription regulation</keyword>
<organism>
    <name type="scientific">Salmonella schwarzengrund (strain CVM19633)</name>
    <dbReference type="NCBI Taxonomy" id="439843"/>
    <lineage>
        <taxon>Bacteria</taxon>
        <taxon>Pseudomonadati</taxon>
        <taxon>Pseudomonadota</taxon>
        <taxon>Gammaproteobacteria</taxon>
        <taxon>Enterobacterales</taxon>
        <taxon>Enterobacteriaceae</taxon>
        <taxon>Salmonella</taxon>
    </lineage>
</organism>
<feature type="chain" id="PRO_1000132695" description="Flagellar transcriptional regulator FlhD">
    <location>
        <begin position="1"/>
        <end position="113"/>
    </location>
</feature>
<feature type="disulfide bond" description="Interchain" evidence="1">
    <location>
        <position position="65"/>
    </location>
</feature>
<comment type="function">
    <text evidence="1">Functions in complex with FlhC as a master transcriptional regulator that regulates transcription of several flagellar and non-flagellar operons by binding to their promoter region. Activates expression of class 2 flagellar genes, including fliA, which is a flagellum-specific sigma factor that turns on the class 3 genes. Also regulates genes whose products function in a variety of physiological pathways.</text>
</comment>
<comment type="subunit">
    <text evidence="1">Homodimer; disulfide-linked. Forms a heterohexamer composed of two FlhC and four FlhD subunits. Each FlhC binds a FlhD dimer, forming a heterotrimer, and a hexamer assembles by dimerization of two heterotrimers.</text>
</comment>
<comment type="subcellular location">
    <subcellularLocation>
        <location evidence="1">Cytoplasm</location>
    </subcellularLocation>
</comment>
<comment type="domain">
    <text evidence="1">The C-terminal region contains a putative helix-turn-helix (HTH) motif, suggesting that this region may bind DNA.</text>
</comment>
<comment type="similarity">
    <text evidence="1">Belongs to the FlhD family.</text>
</comment>
<gene>
    <name evidence="1" type="primary">flhD</name>
    <name type="ordered locus">SeSA_A2081</name>
</gene>
<accession>B4TYV0</accession>
<reference key="1">
    <citation type="journal article" date="2011" name="J. Bacteriol.">
        <title>Comparative genomics of 28 Salmonella enterica isolates: evidence for CRISPR-mediated adaptive sublineage evolution.</title>
        <authorList>
            <person name="Fricke W.F."/>
            <person name="Mammel M.K."/>
            <person name="McDermott P.F."/>
            <person name="Tartera C."/>
            <person name="White D.G."/>
            <person name="Leclerc J.E."/>
            <person name="Ravel J."/>
            <person name="Cebula T.A."/>
        </authorList>
    </citation>
    <scope>NUCLEOTIDE SEQUENCE [LARGE SCALE GENOMIC DNA]</scope>
    <source>
        <strain>CVM19633</strain>
    </source>
</reference>
<evidence type="ECO:0000255" key="1">
    <source>
        <dbReference type="HAMAP-Rule" id="MF_00725"/>
    </source>
</evidence>
<sequence length="113" mass="13006">MHTSELLKHIYDINLSYLLLAQRLIVQDKASAMFRLGINEEMANTLGALTLPQMVKLAETNQLVCHFRFDDHQTITRLTQDSRVDDLQQIHTGIMLSTRLLNEVDDTARKKRA</sequence>